<proteinExistence type="inferred from homology"/>
<feature type="chain" id="PRO_0000237048" description="Small ribosomal subunit protein uS10">
    <location>
        <begin position="1"/>
        <end position="102"/>
    </location>
</feature>
<comment type="function">
    <text evidence="1">Involved in the binding of tRNA to the ribosomes.</text>
</comment>
<comment type="subunit">
    <text evidence="1">Part of the 30S ribosomal subunit.</text>
</comment>
<comment type="similarity">
    <text evidence="1">Belongs to the universal ribosomal protein uS10 family.</text>
</comment>
<protein>
    <recommendedName>
        <fullName evidence="1">Small ribosomal subunit protein uS10</fullName>
    </recommendedName>
    <alternativeName>
        <fullName evidence="2">30S ribosomal protein S10</fullName>
    </alternativeName>
</protein>
<accession>Q39Y07</accession>
<name>RS10_GEOMG</name>
<sequence length="102" mass="11510">MPSQKIRIRLKAFDHKLLDQSVGEIVDTAKRTGARVAGPIPLPTIINKYCVLRGPHVDKKSREQFEIRTHKRLIDILDPTQQTVDALMKLDLSAGVDVEIKL</sequence>
<organism>
    <name type="scientific">Geobacter metallireducens (strain ATCC 53774 / DSM 7210 / GS-15)</name>
    <dbReference type="NCBI Taxonomy" id="269799"/>
    <lineage>
        <taxon>Bacteria</taxon>
        <taxon>Pseudomonadati</taxon>
        <taxon>Thermodesulfobacteriota</taxon>
        <taxon>Desulfuromonadia</taxon>
        <taxon>Geobacterales</taxon>
        <taxon>Geobacteraceae</taxon>
        <taxon>Geobacter</taxon>
    </lineage>
</organism>
<evidence type="ECO:0000255" key="1">
    <source>
        <dbReference type="HAMAP-Rule" id="MF_00508"/>
    </source>
</evidence>
<evidence type="ECO:0000305" key="2"/>
<gene>
    <name evidence="1" type="primary">rpsJ</name>
    <name type="ordered locus">Gmet_0625</name>
</gene>
<dbReference type="EMBL" id="CP000148">
    <property type="protein sequence ID" value="ABB30867.1"/>
    <property type="molecule type" value="Genomic_DNA"/>
</dbReference>
<dbReference type="RefSeq" id="WP_004514236.1">
    <property type="nucleotide sequence ID" value="NC_007517.1"/>
</dbReference>
<dbReference type="SMR" id="Q39Y07"/>
<dbReference type="STRING" id="269799.Gmet_0625"/>
<dbReference type="KEGG" id="gme:Gmet_0625"/>
<dbReference type="eggNOG" id="COG0051">
    <property type="taxonomic scope" value="Bacteria"/>
</dbReference>
<dbReference type="HOGENOM" id="CLU_122625_1_3_7"/>
<dbReference type="Proteomes" id="UP000007073">
    <property type="component" value="Chromosome"/>
</dbReference>
<dbReference type="GO" id="GO:1990904">
    <property type="term" value="C:ribonucleoprotein complex"/>
    <property type="evidence" value="ECO:0007669"/>
    <property type="project" value="UniProtKB-KW"/>
</dbReference>
<dbReference type="GO" id="GO:0005840">
    <property type="term" value="C:ribosome"/>
    <property type="evidence" value="ECO:0007669"/>
    <property type="project" value="UniProtKB-KW"/>
</dbReference>
<dbReference type="GO" id="GO:0003735">
    <property type="term" value="F:structural constituent of ribosome"/>
    <property type="evidence" value="ECO:0007669"/>
    <property type="project" value="InterPro"/>
</dbReference>
<dbReference type="GO" id="GO:0000049">
    <property type="term" value="F:tRNA binding"/>
    <property type="evidence" value="ECO:0007669"/>
    <property type="project" value="UniProtKB-UniRule"/>
</dbReference>
<dbReference type="GO" id="GO:0006412">
    <property type="term" value="P:translation"/>
    <property type="evidence" value="ECO:0007669"/>
    <property type="project" value="UniProtKB-UniRule"/>
</dbReference>
<dbReference type="FunFam" id="3.30.70.600:FF:000001">
    <property type="entry name" value="30S ribosomal protein S10"/>
    <property type="match status" value="1"/>
</dbReference>
<dbReference type="Gene3D" id="3.30.70.600">
    <property type="entry name" value="Ribosomal protein S10 domain"/>
    <property type="match status" value="1"/>
</dbReference>
<dbReference type="HAMAP" id="MF_00508">
    <property type="entry name" value="Ribosomal_uS10"/>
    <property type="match status" value="1"/>
</dbReference>
<dbReference type="InterPro" id="IPR001848">
    <property type="entry name" value="Ribosomal_uS10"/>
</dbReference>
<dbReference type="InterPro" id="IPR018268">
    <property type="entry name" value="Ribosomal_uS10_CS"/>
</dbReference>
<dbReference type="InterPro" id="IPR027486">
    <property type="entry name" value="Ribosomal_uS10_dom"/>
</dbReference>
<dbReference type="InterPro" id="IPR036838">
    <property type="entry name" value="Ribosomal_uS10_dom_sf"/>
</dbReference>
<dbReference type="NCBIfam" id="NF001861">
    <property type="entry name" value="PRK00596.1"/>
    <property type="match status" value="1"/>
</dbReference>
<dbReference type="NCBIfam" id="TIGR01049">
    <property type="entry name" value="rpsJ_bact"/>
    <property type="match status" value="1"/>
</dbReference>
<dbReference type="PANTHER" id="PTHR11700">
    <property type="entry name" value="30S RIBOSOMAL PROTEIN S10 FAMILY MEMBER"/>
    <property type="match status" value="1"/>
</dbReference>
<dbReference type="Pfam" id="PF00338">
    <property type="entry name" value="Ribosomal_S10"/>
    <property type="match status" value="1"/>
</dbReference>
<dbReference type="PRINTS" id="PR00971">
    <property type="entry name" value="RIBOSOMALS10"/>
</dbReference>
<dbReference type="SMART" id="SM01403">
    <property type="entry name" value="Ribosomal_S10"/>
    <property type="match status" value="1"/>
</dbReference>
<dbReference type="SUPFAM" id="SSF54999">
    <property type="entry name" value="Ribosomal protein S10"/>
    <property type="match status" value="1"/>
</dbReference>
<dbReference type="PROSITE" id="PS00361">
    <property type="entry name" value="RIBOSOMAL_S10"/>
    <property type="match status" value="1"/>
</dbReference>
<keyword id="KW-1185">Reference proteome</keyword>
<keyword id="KW-0687">Ribonucleoprotein</keyword>
<keyword id="KW-0689">Ribosomal protein</keyword>
<reference key="1">
    <citation type="journal article" date="2009" name="BMC Microbiol.">
        <title>The genome sequence of Geobacter metallireducens: features of metabolism, physiology and regulation common and dissimilar to Geobacter sulfurreducens.</title>
        <authorList>
            <person name="Aklujkar M."/>
            <person name="Krushkal J."/>
            <person name="DiBartolo G."/>
            <person name="Lapidus A."/>
            <person name="Land M.L."/>
            <person name="Lovley D.R."/>
        </authorList>
    </citation>
    <scope>NUCLEOTIDE SEQUENCE [LARGE SCALE GENOMIC DNA]</scope>
    <source>
        <strain>ATCC 53774 / DSM 7210 / GS-15</strain>
    </source>
</reference>